<name>FB169_ARATH</name>
<organism>
    <name type="scientific">Arabidopsis thaliana</name>
    <name type="common">Mouse-ear cress</name>
    <dbReference type="NCBI Taxonomy" id="3702"/>
    <lineage>
        <taxon>Eukaryota</taxon>
        <taxon>Viridiplantae</taxon>
        <taxon>Streptophyta</taxon>
        <taxon>Embryophyta</taxon>
        <taxon>Tracheophyta</taxon>
        <taxon>Spermatophyta</taxon>
        <taxon>Magnoliopsida</taxon>
        <taxon>eudicotyledons</taxon>
        <taxon>Gunneridae</taxon>
        <taxon>Pentapetalae</taxon>
        <taxon>rosids</taxon>
        <taxon>malvids</taxon>
        <taxon>Brassicales</taxon>
        <taxon>Brassicaceae</taxon>
        <taxon>Camelineae</taxon>
        <taxon>Arabidopsis</taxon>
    </lineage>
</organism>
<proteinExistence type="predicted"/>
<evidence type="ECO:0000255" key="1">
    <source>
        <dbReference type="PROSITE-ProRule" id="PRU00080"/>
    </source>
</evidence>
<accession>Q9LHQ1</accession>
<sequence length="220" mass="25898">MMMMSNLPNDLVEEILSRVTVTFMRTVRSICKKWNALTKDRSFTNKYIRNIAALGEREFLMIKEFSIYLVGVNLHGIQNNNFDLSIELKGKLISMDNTIRRFCISQIFHCNGLFLCVSQKDMDNRLVVWNPYCSKPRWIKPSYNYRTVDRFALGYDKSCGSHKILRLFGDNLNNLEIYDLSSNSWRVPNVTLERDIVYMQPGVSLKEKTYWYARDKESEN</sequence>
<reference key="1">
    <citation type="journal article" date="2000" name="DNA Res.">
        <title>Structural analysis of Arabidopsis thaliana chromosome 3. II. Sequence features of the 4,251,695 bp regions covered by 90 P1, TAC and BAC clones.</title>
        <authorList>
            <person name="Kaneko T."/>
            <person name="Katoh T."/>
            <person name="Sato S."/>
            <person name="Nakamura Y."/>
            <person name="Asamizu E."/>
            <person name="Tabata S."/>
        </authorList>
    </citation>
    <scope>NUCLEOTIDE SEQUENCE [LARGE SCALE GENOMIC DNA]</scope>
    <source>
        <strain>cv. Columbia</strain>
    </source>
</reference>
<reference key="2">
    <citation type="journal article" date="2017" name="Plant J.">
        <title>Araport11: a complete reannotation of the Arabidopsis thaliana reference genome.</title>
        <authorList>
            <person name="Cheng C.Y."/>
            <person name="Krishnakumar V."/>
            <person name="Chan A.P."/>
            <person name="Thibaud-Nissen F."/>
            <person name="Schobel S."/>
            <person name="Town C.D."/>
        </authorList>
    </citation>
    <scope>GENOME REANNOTATION</scope>
    <source>
        <strain>cv. Columbia</strain>
    </source>
</reference>
<gene>
    <name type="ordered locus">At3g20705</name>
    <name type="ORF">F3H11.10</name>
</gene>
<protein>
    <recommendedName>
        <fullName>Putative F-box protein At3g20705</fullName>
    </recommendedName>
</protein>
<keyword id="KW-1185">Reference proteome</keyword>
<dbReference type="EMBL" id="AP002034">
    <property type="protein sequence ID" value="BAB02247.1"/>
    <property type="molecule type" value="Genomic_DNA"/>
</dbReference>
<dbReference type="EMBL" id="CP002686">
    <property type="status" value="NOT_ANNOTATED_CDS"/>
    <property type="molecule type" value="Genomic_DNA"/>
</dbReference>
<dbReference type="FunCoup" id="Q9LHQ1">
    <property type="interactions" value="13"/>
</dbReference>
<dbReference type="Araport" id="AT3G20705"/>
<dbReference type="TAIR" id="AT3G20705"/>
<dbReference type="InParanoid" id="Q9LHQ1"/>
<dbReference type="PRO" id="PR:Q9LHQ1"/>
<dbReference type="Proteomes" id="UP000006548">
    <property type="component" value="Chromosome 3"/>
</dbReference>
<dbReference type="ExpressionAtlas" id="Q9LHQ1">
    <property type="expression patterns" value="baseline and differential"/>
</dbReference>
<dbReference type="CDD" id="cd22157">
    <property type="entry name" value="F-box_AtFBW1-like"/>
    <property type="match status" value="1"/>
</dbReference>
<dbReference type="Gene3D" id="1.20.1280.50">
    <property type="match status" value="1"/>
</dbReference>
<dbReference type="InterPro" id="IPR017451">
    <property type="entry name" value="F-box-assoc_interact_dom"/>
</dbReference>
<dbReference type="InterPro" id="IPR036047">
    <property type="entry name" value="F-box-like_dom_sf"/>
</dbReference>
<dbReference type="InterPro" id="IPR001810">
    <property type="entry name" value="F-box_dom"/>
</dbReference>
<dbReference type="InterPro" id="IPR050796">
    <property type="entry name" value="SCF_F-box_component"/>
</dbReference>
<dbReference type="NCBIfam" id="TIGR01640">
    <property type="entry name" value="F_box_assoc_1"/>
    <property type="match status" value="1"/>
</dbReference>
<dbReference type="PANTHER" id="PTHR31672">
    <property type="entry name" value="BNACNNG10540D PROTEIN"/>
    <property type="match status" value="1"/>
</dbReference>
<dbReference type="PANTHER" id="PTHR31672:SF13">
    <property type="entry name" value="F-BOX PROTEIN CPR30-LIKE"/>
    <property type="match status" value="1"/>
</dbReference>
<dbReference type="Pfam" id="PF00646">
    <property type="entry name" value="F-box"/>
    <property type="match status" value="1"/>
</dbReference>
<dbReference type="SMART" id="SM00256">
    <property type="entry name" value="FBOX"/>
    <property type="match status" value="1"/>
</dbReference>
<dbReference type="SUPFAM" id="SSF81383">
    <property type="entry name" value="F-box domain"/>
    <property type="match status" value="1"/>
</dbReference>
<dbReference type="PROSITE" id="PS50181">
    <property type="entry name" value="FBOX"/>
    <property type="match status" value="1"/>
</dbReference>
<feature type="chain" id="PRO_0000283439" description="Putative F-box protein At3g20705">
    <location>
        <begin position="1"/>
        <end position="220"/>
    </location>
</feature>
<feature type="domain" description="F-box" evidence="1">
    <location>
        <begin position="1"/>
        <end position="51"/>
    </location>
</feature>